<feature type="chain" id="PRO_0000175897" description="Probable transcriptional regulatory protein SE_0437">
    <location>
        <begin position="1"/>
        <end position="238"/>
    </location>
</feature>
<accession>Q8CTK9</accession>
<comment type="subcellular location">
    <subcellularLocation>
        <location evidence="1">Cytoplasm</location>
    </subcellularLocation>
</comment>
<comment type="similarity">
    <text evidence="1">Belongs to the TACO1 family. YeeN subfamily.</text>
</comment>
<comment type="sequence caution" evidence="2">
    <conflict type="erroneous initiation">
        <sequence resource="EMBL-CDS" id="AAO04034"/>
    </conflict>
</comment>
<sequence length="238" mass="26567">MGRKWNNIKEKKAQKDKNTSRIYAKFGKEIYVAAKSGEPNPESNQTLRLVLERAKTYSVPNHIIDRAIDKAKGAGDENYDHLRYEGFGPNGSMLIVDALTNNVNRTASDVRAAFGKNGGNMGVSGSVAYMFDHTATFGVEGKSVDEVLETLMEQDIDVRDVIDDNGLTIVYAEPDQFAQVQDALREAGVEEFKVAEFEMLPQTDIELSEEDQAIFEKLIDALEDLEDVQNVFHNVDLK</sequence>
<proteinExistence type="inferred from homology"/>
<organism>
    <name type="scientific">Staphylococcus epidermidis (strain ATCC 12228 / FDA PCI 1200)</name>
    <dbReference type="NCBI Taxonomy" id="176280"/>
    <lineage>
        <taxon>Bacteria</taxon>
        <taxon>Bacillati</taxon>
        <taxon>Bacillota</taxon>
        <taxon>Bacilli</taxon>
        <taxon>Bacillales</taxon>
        <taxon>Staphylococcaceae</taxon>
        <taxon>Staphylococcus</taxon>
    </lineage>
</organism>
<dbReference type="EMBL" id="AE015929">
    <property type="protein sequence ID" value="AAO04034.1"/>
    <property type="status" value="ALT_INIT"/>
    <property type="molecule type" value="Genomic_DNA"/>
</dbReference>
<dbReference type="RefSeq" id="NP_763992.2">
    <property type="nucleotide sequence ID" value="NC_004461.1"/>
</dbReference>
<dbReference type="RefSeq" id="WP_001832120.1">
    <property type="nucleotide sequence ID" value="NZ_WBME01000018.1"/>
</dbReference>
<dbReference type="SMR" id="Q8CTK9"/>
<dbReference type="KEGG" id="sep:SE_0437"/>
<dbReference type="PATRIC" id="fig|176280.10.peg.411"/>
<dbReference type="eggNOG" id="COG0217">
    <property type="taxonomic scope" value="Bacteria"/>
</dbReference>
<dbReference type="HOGENOM" id="CLU_062974_4_0_9"/>
<dbReference type="OrthoDB" id="9781053at2"/>
<dbReference type="Proteomes" id="UP000001411">
    <property type="component" value="Chromosome"/>
</dbReference>
<dbReference type="GO" id="GO:0005829">
    <property type="term" value="C:cytosol"/>
    <property type="evidence" value="ECO:0007669"/>
    <property type="project" value="TreeGrafter"/>
</dbReference>
<dbReference type="GO" id="GO:0003677">
    <property type="term" value="F:DNA binding"/>
    <property type="evidence" value="ECO:0007669"/>
    <property type="project" value="UniProtKB-UniRule"/>
</dbReference>
<dbReference type="GO" id="GO:0006355">
    <property type="term" value="P:regulation of DNA-templated transcription"/>
    <property type="evidence" value="ECO:0007669"/>
    <property type="project" value="UniProtKB-UniRule"/>
</dbReference>
<dbReference type="FunFam" id="1.10.10.200:FF:000003">
    <property type="entry name" value="Probable transcriptional regulatory protein YeeN"/>
    <property type="match status" value="1"/>
</dbReference>
<dbReference type="Gene3D" id="1.10.10.200">
    <property type="match status" value="1"/>
</dbReference>
<dbReference type="Gene3D" id="3.30.70.980">
    <property type="match status" value="2"/>
</dbReference>
<dbReference type="HAMAP" id="MF_00693">
    <property type="entry name" value="Transcrip_reg_TACO1"/>
    <property type="match status" value="1"/>
</dbReference>
<dbReference type="HAMAP" id="MF_00918">
    <property type="entry name" value="Transcrip_reg_TACO1_YeeN"/>
    <property type="match status" value="1"/>
</dbReference>
<dbReference type="InterPro" id="IPR017856">
    <property type="entry name" value="Integrase-like_N"/>
</dbReference>
<dbReference type="InterPro" id="IPR048300">
    <property type="entry name" value="TACO1_YebC-like_2nd/3rd_dom"/>
</dbReference>
<dbReference type="InterPro" id="IPR049083">
    <property type="entry name" value="TACO1_YebC_N"/>
</dbReference>
<dbReference type="InterPro" id="IPR002876">
    <property type="entry name" value="Transcrip_reg_TACO1-like"/>
</dbReference>
<dbReference type="InterPro" id="IPR026564">
    <property type="entry name" value="Transcrip_reg_TACO1-like_dom3"/>
</dbReference>
<dbReference type="InterPro" id="IPR026562">
    <property type="entry name" value="Transcrip_reg_TACO1_YeeN"/>
</dbReference>
<dbReference type="InterPro" id="IPR029072">
    <property type="entry name" value="YebC-like"/>
</dbReference>
<dbReference type="NCBIfam" id="NF001030">
    <property type="entry name" value="PRK00110.1"/>
    <property type="match status" value="1"/>
</dbReference>
<dbReference type="NCBIfam" id="NF009044">
    <property type="entry name" value="PRK12378.1"/>
    <property type="match status" value="1"/>
</dbReference>
<dbReference type="NCBIfam" id="TIGR01033">
    <property type="entry name" value="YebC/PmpR family DNA-binding transcriptional regulator"/>
    <property type="match status" value="1"/>
</dbReference>
<dbReference type="PANTHER" id="PTHR12532">
    <property type="entry name" value="TRANSLATIONAL ACTIVATOR OF CYTOCHROME C OXIDASE 1"/>
    <property type="match status" value="1"/>
</dbReference>
<dbReference type="PANTHER" id="PTHR12532:SF0">
    <property type="entry name" value="TRANSLATIONAL ACTIVATOR OF CYTOCHROME C OXIDASE 1"/>
    <property type="match status" value="1"/>
</dbReference>
<dbReference type="Pfam" id="PF20772">
    <property type="entry name" value="TACO1_YebC_N"/>
    <property type="match status" value="1"/>
</dbReference>
<dbReference type="Pfam" id="PF01709">
    <property type="entry name" value="Transcrip_reg"/>
    <property type="match status" value="1"/>
</dbReference>
<dbReference type="SUPFAM" id="SSF75625">
    <property type="entry name" value="YebC-like"/>
    <property type="match status" value="1"/>
</dbReference>
<name>Y437_STAES</name>
<keyword id="KW-0963">Cytoplasm</keyword>
<keyword id="KW-0238">DNA-binding</keyword>
<keyword id="KW-0804">Transcription</keyword>
<keyword id="KW-0805">Transcription regulation</keyword>
<evidence type="ECO:0000255" key="1">
    <source>
        <dbReference type="HAMAP-Rule" id="MF_00918"/>
    </source>
</evidence>
<evidence type="ECO:0000305" key="2"/>
<protein>
    <recommendedName>
        <fullName evidence="1">Probable transcriptional regulatory protein SE_0437</fullName>
    </recommendedName>
</protein>
<reference key="1">
    <citation type="journal article" date="2003" name="Mol. Microbiol.">
        <title>Genome-based analysis of virulence genes in a non-biofilm-forming Staphylococcus epidermidis strain (ATCC 12228).</title>
        <authorList>
            <person name="Zhang Y.-Q."/>
            <person name="Ren S.-X."/>
            <person name="Li H.-L."/>
            <person name="Wang Y.-X."/>
            <person name="Fu G."/>
            <person name="Yang J."/>
            <person name="Qin Z.-Q."/>
            <person name="Miao Y.-G."/>
            <person name="Wang W.-Y."/>
            <person name="Chen R.-S."/>
            <person name="Shen Y."/>
            <person name="Chen Z."/>
            <person name="Yuan Z.-H."/>
            <person name="Zhao G.-P."/>
            <person name="Qu D."/>
            <person name="Danchin A."/>
            <person name="Wen Y.-M."/>
        </authorList>
    </citation>
    <scope>NUCLEOTIDE SEQUENCE [LARGE SCALE GENOMIC DNA]</scope>
    <source>
        <strain>ATCC 12228 / FDA PCI 1200</strain>
    </source>
</reference>
<gene>
    <name type="ordered locus">SE_0437</name>
</gene>